<name>CID2A_BRAFL</name>
<protein>
    <recommendedName>
        <fullName>CDGSH iron-sulfur domain-containing protein 2 homolog A</fullName>
    </recommendedName>
</protein>
<reference key="1">
    <citation type="journal article" date="2008" name="Nature">
        <title>The amphioxus genome and the evolution of the chordate karyotype.</title>
        <authorList>
            <person name="Putnam N.H."/>
            <person name="Butts T."/>
            <person name="Ferrier D.E.K."/>
            <person name="Furlong R.F."/>
            <person name="Hellsten U."/>
            <person name="Kawashima T."/>
            <person name="Robinson-Rechavi M."/>
            <person name="Shoguchi E."/>
            <person name="Terry A."/>
            <person name="Yu J.-K."/>
            <person name="Benito-Gutierrez E.L."/>
            <person name="Dubchak I."/>
            <person name="Garcia-Fernandez J."/>
            <person name="Gibson-Brown J.J."/>
            <person name="Grigoriev I.V."/>
            <person name="Horton A.C."/>
            <person name="de Jong P.J."/>
            <person name="Jurka J."/>
            <person name="Kapitonov V.V."/>
            <person name="Kohara Y."/>
            <person name="Kuroki Y."/>
            <person name="Lindquist E."/>
            <person name="Lucas S."/>
            <person name="Osoegawa K."/>
            <person name="Pennacchio L.A."/>
            <person name="Salamov A.A."/>
            <person name="Satou Y."/>
            <person name="Sauka-Spengler T."/>
            <person name="Schmutz J."/>
            <person name="Shin-I T."/>
            <person name="Toyoda A."/>
            <person name="Bronner-Fraser M."/>
            <person name="Fujiyama A."/>
            <person name="Holland L.Z."/>
            <person name="Holland P.W.H."/>
            <person name="Satoh N."/>
            <person name="Rokhsar D.S."/>
        </authorList>
    </citation>
    <scope>NUCLEOTIDE SEQUENCE [LARGE SCALE GENOMIC DNA]</scope>
    <source>
        <strain>S238N-H82</strain>
        <tissue>Testis</tissue>
    </source>
</reference>
<comment type="cofactor">
    <cofactor evidence="1">
        <name>[2Fe-2S] cluster</name>
        <dbReference type="ChEBI" id="CHEBI:190135"/>
    </cofactor>
    <text evidence="1">Binds 1 [2Fe-2S] cluster.</text>
</comment>
<comment type="subcellular location">
    <subcellularLocation>
        <location evidence="3">Endoplasmic reticulum membrane</location>
        <topology evidence="3">Single-pass membrane protein</topology>
    </subcellularLocation>
</comment>
<comment type="similarity">
    <text evidence="3">Belongs to the CISD protein family. CISD2 subfamily.</text>
</comment>
<evidence type="ECO:0000250" key="1"/>
<evidence type="ECO:0000255" key="2"/>
<evidence type="ECO:0000305" key="3"/>
<keyword id="KW-0001">2Fe-2S</keyword>
<keyword id="KW-0256">Endoplasmic reticulum</keyword>
<keyword id="KW-0408">Iron</keyword>
<keyword id="KW-0411">Iron-sulfur</keyword>
<keyword id="KW-0472">Membrane</keyword>
<keyword id="KW-0479">Metal-binding</keyword>
<keyword id="KW-1185">Reference proteome</keyword>
<keyword id="KW-0812">Transmembrane</keyword>
<keyword id="KW-1133">Transmembrane helix</keyword>
<sequence length="131" mass="14786">MEFLSKIVRVHIPDYLNSVPVPDSFGGFLDLTAGQWLHLFAFSGTVAAAVYMSVKPYLDKKDQKDQLVNLRIQKESSKVVNMVDIEDLGNKVCYCRCWRSKKFPLCDGSHAKHNEDTGDNVGPLVLKRKDV</sequence>
<accession>C3ZWH9</accession>
<dbReference type="EMBL" id="GG666699">
    <property type="protein sequence ID" value="EEN43108.1"/>
    <property type="molecule type" value="Genomic_DNA"/>
</dbReference>
<dbReference type="RefSeq" id="XP_002587097.1">
    <property type="nucleotide sequence ID" value="XM_002587051.1"/>
</dbReference>
<dbReference type="SMR" id="C3ZWH9"/>
<dbReference type="STRING" id="7739.C3ZWH9"/>
<dbReference type="eggNOG" id="KOG3461">
    <property type="taxonomic scope" value="Eukaryota"/>
</dbReference>
<dbReference type="InParanoid" id="C3ZWH9"/>
<dbReference type="Proteomes" id="UP000001554">
    <property type="component" value="Unplaced"/>
</dbReference>
<dbReference type="GO" id="GO:0005789">
    <property type="term" value="C:endoplasmic reticulum membrane"/>
    <property type="evidence" value="ECO:0007669"/>
    <property type="project" value="UniProtKB-SubCell"/>
</dbReference>
<dbReference type="GO" id="GO:0005741">
    <property type="term" value="C:mitochondrial outer membrane"/>
    <property type="evidence" value="ECO:0000318"/>
    <property type="project" value="GO_Central"/>
</dbReference>
<dbReference type="GO" id="GO:0051537">
    <property type="term" value="F:2 iron, 2 sulfur cluster binding"/>
    <property type="evidence" value="ECO:0000318"/>
    <property type="project" value="GO_Central"/>
</dbReference>
<dbReference type="GO" id="GO:0046872">
    <property type="term" value="F:metal ion binding"/>
    <property type="evidence" value="ECO:0007669"/>
    <property type="project" value="UniProtKB-KW"/>
</dbReference>
<dbReference type="GO" id="GO:0000422">
    <property type="term" value="P:autophagy of mitochondrion"/>
    <property type="evidence" value="ECO:0000318"/>
    <property type="project" value="GO_Central"/>
</dbReference>
<dbReference type="GO" id="GO:0010506">
    <property type="term" value="P:regulation of autophagy"/>
    <property type="evidence" value="ECO:0007669"/>
    <property type="project" value="InterPro"/>
</dbReference>
<dbReference type="FunFam" id="3.40.5.90:FF:000001">
    <property type="entry name" value="CDGSH iron-sulfur domain-containing protein 1"/>
    <property type="match status" value="1"/>
</dbReference>
<dbReference type="Gene3D" id="3.40.5.90">
    <property type="entry name" value="CDGSH iron-sulfur domain, mitoNEET-type"/>
    <property type="match status" value="1"/>
</dbReference>
<dbReference type="InterPro" id="IPR045131">
    <property type="entry name" value="CISD1/2"/>
</dbReference>
<dbReference type="InterPro" id="IPR018967">
    <property type="entry name" value="FeS-contain_CDGSH-typ"/>
</dbReference>
<dbReference type="InterPro" id="IPR019610">
    <property type="entry name" value="FeS-contain_mitoNEET_N"/>
</dbReference>
<dbReference type="InterPro" id="IPR042216">
    <property type="entry name" value="MitoNEET_CISD"/>
</dbReference>
<dbReference type="PANTHER" id="PTHR13680">
    <property type="entry name" value="CDGSH IRON-SULFUR DOMAIN-CONTAINING PROTEIN 1"/>
    <property type="match status" value="1"/>
</dbReference>
<dbReference type="PANTHER" id="PTHR13680:SF33">
    <property type="entry name" value="CDGSH IRON-SULFUR DOMAIN-CONTAINING PROTEIN 2"/>
    <property type="match status" value="1"/>
</dbReference>
<dbReference type="Pfam" id="PF10660">
    <property type="entry name" value="MitoNEET_N"/>
    <property type="match status" value="1"/>
</dbReference>
<dbReference type="Pfam" id="PF09360">
    <property type="entry name" value="zf-CDGSH"/>
    <property type="match status" value="1"/>
</dbReference>
<dbReference type="SMART" id="SM00704">
    <property type="entry name" value="ZnF_CDGSH"/>
    <property type="match status" value="1"/>
</dbReference>
<proteinExistence type="inferred from homology"/>
<gene>
    <name type="ORF">BRAFLDRAFT_285975</name>
</gene>
<feature type="chain" id="PRO_0000392021" description="CDGSH iron-sulfur domain-containing protein 2 homolog A">
    <location>
        <begin position="1"/>
        <end position="131"/>
    </location>
</feature>
<feature type="topological domain" description="Lumenal" evidence="2">
    <location>
        <begin position="1"/>
        <end position="35"/>
    </location>
</feature>
<feature type="transmembrane region" description="Helical" evidence="2">
    <location>
        <begin position="36"/>
        <end position="58"/>
    </location>
</feature>
<feature type="topological domain" description="Cytoplasmic" evidence="2">
    <location>
        <begin position="59"/>
        <end position="131"/>
    </location>
</feature>
<feature type="binding site" evidence="1">
    <location>
        <position position="95"/>
    </location>
    <ligand>
        <name>[2Fe-2S] cluster</name>
        <dbReference type="ChEBI" id="CHEBI:190135"/>
    </ligand>
</feature>
<feature type="binding site" evidence="1">
    <location>
        <position position="97"/>
    </location>
    <ligand>
        <name>[2Fe-2S] cluster</name>
        <dbReference type="ChEBI" id="CHEBI:190135"/>
    </ligand>
</feature>
<feature type="binding site" evidence="1">
    <location>
        <position position="106"/>
    </location>
    <ligand>
        <name>[2Fe-2S] cluster</name>
        <dbReference type="ChEBI" id="CHEBI:190135"/>
    </ligand>
</feature>
<feature type="binding site" evidence="1">
    <location>
        <position position="110"/>
    </location>
    <ligand>
        <name>[2Fe-2S] cluster</name>
        <dbReference type="ChEBI" id="CHEBI:190135"/>
    </ligand>
</feature>
<organism>
    <name type="scientific">Branchiostoma floridae</name>
    <name type="common">Florida lancelet</name>
    <name type="synonym">Amphioxus</name>
    <dbReference type="NCBI Taxonomy" id="7739"/>
    <lineage>
        <taxon>Eukaryota</taxon>
        <taxon>Metazoa</taxon>
        <taxon>Chordata</taxon>
        <taxon>Cephalochordata</taxon>
        <taxon>Leptocardii</taxon>
        <taxon>Amphioxiformes</taxon>
        <taxon>Branchiostomatidae</taxon>
        <taxon>Branchiostoma</taxon>
    </lineage>
</organism>